<reference key="1">
    <citation type="journal article" date="2007" name="J. Bacteriol.">
        <title>Whole-genome analysis of the methyl tert-butyl ether-degrading beta-proteobacterium Methylibium petroleiphilum PM1.</title>
        <authorList>
            <person name="Kane S.R."/>
            <person name="Chakicherla A.Y."/>
            <person name="Chain P.S.G."/>
            <person name="Schmidt R."/>
            <person name="Shin M.W."/>
            <person name="Legler T.C."/>
            <person name="Scow K.M."/>
            <person name="Larimer F.W."/>
            <person name="Lucas S.M."/>
            <person name="Richardson P.M."/>
            <person name="Hristova K.R."/>
        </authorList>
    </citation>
    <scope>NUCLEOTIDE SEQUENCE [LARGE SCALE GENOMIC DNA]</scope>
    <source>
        <strain>ATCC BAA-1232 / LMG 22953 / PM1</strain>
    </source>
</reference>
<protein>
    <recommendedName>
        <fullName evidence="1">ATP-dependent zinc metalloprotease FtsH</fullName>
        <ecNumber evidence="1">3.4.24.-</ecNumber>
    </recommendedName>
</protein>
<feature type="chain" id="PRO_0000400355" description="ATP-dependent zinc metalloprotease FtsH">
    <location>
        <begin position="1"/>
        <end position="617"/>
    </location>
</feature>
<feature type="topological domain" description="Cytoplasmic" evidence="1">
    <location>
        <begin position="1"/>
        <end position="7"/>
    </location>
</feature>
<feature type="transmembrane region" description="Helical" evidence="1">
    <location>
        <begin position="8"/>
        <end position="28"/>
    </location>
</feature>
<feature type="topological domain" description="Periplasmic" evidence="1">
    <location>
        <begin position="29"/>
        <end position="102"/>
    </location>
</feature>
<feature type="transmembrane region" description="Helical" evidence="1">
    <location>
        <begin position="103"/>
        <end position="123"/>
    </location>
</feature>
<feature type="topological domain" description="Cytoplasmic" evidence="1">
    <location>
        <begin position="124"/>
        <end position="617"/>
    </location>
</feature>
<feature type="active site" evidence="1">
    <location>
        <position position="422"/>
    </location>
</feature>
<feature type="binding site" evidence="1">
    <location>
        <begin position="198"/>
        <end position="205"/>
    </location>
    <ligand>
        <name>ATP</name>
        <dbReference type="ChEBI" id="CHEBI:30616"/>
    </ligand>
</feature>
<feature type="binding site" evidence="1">
    <location>
        <position position="421"/>
    </location>
    <ligand>
        <name>Zn(2+)</name>
        <dbReference type="ChEBI" id="CHEBI:29105"/>
        <note>catalytic</note>
    </ligand>
</feature>
<feature type="binding site" evidence="1">
    <location>
        <position position="425"/>
    </location>
    <ligand>
        <name>Zn(2+)</name>
        <dbReference type="ChEBI" id="CHEBI:29105"/>
        <note>catalytic</note>
    </ligand>
</feature>
<feature type="binding site" evidence="1">
    <location>
        <position position="498"/>
    </location>
    <ligand>
        <name>Zn(2+)</name>
        <dbReference type="ChEBI" id="CHEBI:29105"/>
        <note>catalytic</note>
    </ligand>
</feature>
<keyword id="KW-0067">ATP-binding</keyword>
<keyword id="KW-0997">Cell inner membrane</keyword>
<keyword id="KW-1003">Cell membrane</keyword>
<keyword id="KW-0378">Hydrolase</keyword>
<keyword id="KW-0472">Membrane</keyword>
<keyword id="KW-0479">Metal-binding</keyword>
<keyword id="KW-0482">Metalloprotease</keyword>
<keyword id="KW-0547">Nucleotide-binding</keyword>
<keyword id="KW-0645">Protease</keyword>
<keyword id="KW-1185">Reference proteome</keyword>
<keyword id="KW-0812">Transmembrane</keyword>
<keyword id="KW-1133">Transmembrane helix</keyword>
<keyword id="KW-0862">Zinc</keyword>
<proteinExistence type="inferred from homology"/>
<organism>
    <name type="scientific">Methylibium petroleiphilum (strain ATCC BAA-1232 / LMG 22953 / PM1)</name>
    <dbReference type="NCBI Taxonomy" id="420662"/>
    <lineage>
        <taxon>Bacteria</taxon>
        <taxon>Pseudomonadati</taxon>
        <taxon>Pseudomonadota</taxon>
        <taxon>Betaproteobacteria</taxon>
        <taxon>Burkholderiales</taxon>
        <taxon>Sphaerotilaceae</taxon>
        <taxon>Methylibium</taxon>
    </lineage>
</organism>
<sequence>MKIPFDRWLGWPTLLLLLLGLWLLGSSLRDQRTVEAVPYSVFEQYLRDGQLTDVQVGDQVISARFTSPHDGKATVVAELVEPAMAERMSHYGVSYRRVRESNWLSQLLSWMAGPLLLLGFWYFMSRRIDGQQGGAGFLGIGRSHAKVYMEKSTGVRFDDVAGVDEAKAELQEIVDFLRDPKAHGRLGARMPKGVLLMGPTGTGKTLLARAVAGEAGVPFFSISGSEFIEMFVGVGAARVRDLFEQARAAAPAIIFIDELDALGKARGMGALVGGHDEREQTLNQLLVELDGFDPSVGVVLLAATNRPEILDPALLRAGRFDRQVLVDRPDRSGRRAILRVHAAKVRLAPDWDLDQVAAITVGFAGADLANLVNEAALVATRRRADAVTLADFTIAIERIVAGIEKKHGLLGEDEKRLVAYHELGHALTALALPSTDRVQKVSIVPHGIGALGYTLQRPSEDRHLQRRTELIDRLTVLLGGRAAEELVFGEPSTGAADDLARATGMARDMVLRFGMDEGLGPVAYADAPASPLVGLPAMPTLSERASPATAERIDAAVQALLGHARQRATEILRDNREMLDRTAAALMAQETLDEEALLALTAGLRAAGRPAAIRQVA</sequence>
<dbReference type="EC" id="3.4.24.-" evidence="1"/>
<dbReference type="EMBL" id="CP000555">
    <property type="protein sequence ID" value="ABM95018.1"/>
    <property type="molecule type" value="Genomic_DNA"/>
</dbReference>
<dbReference type="RefSeq" id="WP_011829655.1">
    <property type="nucleotide sequence ID" value="NC_008825.1"/>
</dbReference>
<dbReference type="SMR" id="A2SHH9"/>
<dbReference type="STRING" id="420662.Mpe_A2062"/>
<dbReference type="KEGG" id="mpt:Mpe_A2062"/>
<dbReference type="eggNOG" id="COG0465">
    <property type="taxonomic scope" value="Bacteria"/>
</dbReference>
<dbReference type="HOGENOM" id="CLU_000688_16_2_4"/>
<dbReference type="Proteomes" id="UP000000366">
    <property type="component" value="Chromosome"/>
</dbReference>
<dbReference type="GO" id="GO:0005886">
    <property type="term" value="C:plasma membrane"/>
    <property type="evidence" value="ECO:0007669"/>
    <property type="project" value="UniProtKB-SubCell"/>
</dbReference>
<dbReference type="GO" id="GO:0005524">
    <property type="term" value="F:ATP binding"/>
    <property type="evidence" value="ECO:0007669"/>
    <property type="project" value="UniProtKB-UniRule"/>
</dbReference>
<dbReference type="GO" id="GO:0016887">
    <property type="term" value="F:ATP hydrolysis activity"/>
    <property type="evidence" value="ECO:0007669"/>
    <property type="project" value="UniProtKB-UniRule"/>
</dbReference>
<dbReference type="GO" id="GO:0004176">
    <property type="term" value="F:ATP-dependent peptidase activity"/>
    <property type="evidence" value="ECO:0007669"/>
    <property type="project" value="InterPro"/>
</dbReference>
<dbReference type="GO" id="GO:0004222">
    <property type="term" value="F:metalloendopeptidase activity"/>
    <property type="evidence" value="ECO:0007669"/>
    <property type="project" value="InterPro"/>
</dbReference>
<dbReference type="GO" id="GO:0008270">
    <property type="term" value="F:zinc ion binding"/>
    <property type="evidence" value="ECO:0007669"/>
    <property type="project" value="UniProtKB-UniRule"/>
</dbReference>
<dbReference type="GO" id="GO:0030163">
    <property type="term" value="P:protein catabolic process"/>
    <property type="evidence" value="ECO:0007669"/>
    <property type="project" value="UniProtKB-UniRule"/>
</dbReference>
<dbReference type="GO" id="GO:0006508">
    <property type="term" value="P:proteolysis"/>
    <property type="evidence" value="ECO:0007669"/>
    <property type="project" value="UniProtKB-KW"/>
</dbReference>
<dbReference type="CDD" id="cd19501">
    <property type="entry name" value="RecA-like_FtsH"/>
    <property type="match status" value="1"/>
</dbReference>
<dbReference type="FunFam" id="1.10.8.60:FF:000001">
    <property type="entry name" value="ATP-dependent zinc metalloprotease FtsH"/>
    <property type="match status" value="1"/>
</dbReference>
<dbReference type="FunFam" id="1.20.58.760:FF:000001">
    <property type="entry name" value="ATP-dependent zinc metalloprotease FtsH"/>
    <property type="match status" value="1"/>
</dbReference>
<dbReference type="FunFam" id="3.40.50.300:FF:000001">
    <property type="entry name" value="ATP-dependent zinc metalloprotease FtsH"/>
    <property type="match status" value="1"/>
</dbReference>
<dbReference type="Gene3D" id="1.10.8.60">
    <property type="match status" value="1"/>
</dbReference>
<dbReference type="Gene3D" id="3.40.50.300">
    <property type="entry name" value="P-loop containing nucleotide triphosphate hydrolases"/>
    <property type="match status" value="1"/>
</dbReference>
<dbReference type="Gene3D" id="1.20.58.760">
    <property type="entry name" value="Peptidase M41"/>
    <property type="match status" value="1"/>
</dbReference>
<dbReference type="HAMAP" id="MF_01458">
    <property type="entry name" value="FtsH"/>
    <property type="match status" value="1"/>
</dbReference>
<dbReference type="InterPro" id="IPR003593">
    <property type="entry name" value="AAA+_ATPase"/>
</dbReference>
<dbReference type="InterPro" id="IPR041569">
    <property type="entry name" value="AAA_lid_3"/>
</dbReference>
<dbReference type="InterPro" id="IPR003959">
    <property type="entry name" value="ATPase_AAA_core"/>
</dbReference>
<dbReference type="InterPro" id="IPR003960">
    <property type="entry name" value="ATPase_AAA_CS"/>
</dbReference>
<dbReference type="InterPro" id="IPR005936">
    <property type="entry name" value="FtsH"/>
</dbReference>
<dbReference type="InterPro" id="IPR027417">
    <property type="entry name" value="P-loop_NTPase"/>
</dbReference>
<dbReference type="InterPro" id="IPR011546">
    <property type="entry name" value="Pept_M41_FtsH_extracell"/>
</dbReference>
<dbReference type="InterPro" id="IPR000642">
    <property type="entry name" value="Peptidase_M41"/>
</dbReference>
<dbReference type="InterPro" id="IPR037219">
    <property type="entry name" value="Peptidase_M41-like"/>
</dbReference>
<dbReference type="NCBIfam" id="TIGR01241">
    <property type="entry name" value="FtsH_fam"/>
    <property type="match status" value="1"/>
</dbReference>
<dbReference type="PANTHER" id="PTHR23076:SF97">
    <property type="entry name" value="ATP-DEPENDENT ZINC METALLOPROTEASE YME1L1"/>
    <property type="match status" value="1"/>
</dbReference>
<dbReference type="PANTHER" id="PTHR23076">
    <property type="entry name" value="METALLOPROTEASE M41 FTSH"/>
    <property type="match status" value="1"/>
</dbReference>
<dbReference type="Pfam" id="PF00004">
    <property type="entry name" value="AAA"/>
    <property type="match status" value="1"/>
</dbReference>
<dbReference type="Pfam" id="PF17862">
    <property type="entry name" value="AAA_lid_3"/>
    <property type="match status" value="1"/>
</dbReference>
<dbReference type="Pfam" id="PF06480">
    <property type="entry name" value="FtsH_ext"/>
    <property type="match status" value="1"/>
</dbReference>
<dbReference type="Pfam" id="PF01434">
    <property type="entry name" value="Peptidase_M41"/>
    <property type="match status" value="1"/>
</dbReference>
<dbReference type="SMART" id="SM00382">
    <property type="entry name" value="AAA"/>
    <property type="match status" value="1"/>
</dbReference>
<dbReference type="SUPFAM" id="SSF140990">
    <property type="entry name" value="FtsH protease domain-like"/>
    <property type="match status" value="1"/>
</dbReference>
<dbReference type="SUPFAM" id="SSF52540">
    <property type="entry name" value="P-loop containing nucleoside triphosphate hydrolases"/>
    <property type="match status" value="1"/>
</dbReference>
<dbReference type="PROSITE" id="PS00674">
    <property type="entry name" value="AAA"/>
    <property type="match status" value="1"/>
</dbReference>
<accession>A2SHH9</accession>
<gene>
    <name evidence="1" type="primary">ftsH</name>
    <name type="ordered locus">Mpe_A2062</name>
</gene>
<name>FTSH_METPP</name>
<evidence type="ECO:0000255" key="1">
    <source>
        <dbReference type="HAMAP-Rule" id="MF_01458"/>
    </source>
</evidence>
<comment type="function">
    <text evidence="1">Acts as a processive, ATP-dependent zinc metallopeptidase for both cytoplasmic and membrane proteins. Plays a role in the quality control of integral membrane proteins.</text>
</comment>
<comment type="cofactor">
    <cofactor evidence="1">
        <name>Zn(2+)</name>
        <dbReference type="ChEBI" id="CHEBI:29105"/>
    </cofactor>
    <text evidence="1">Binds 1 zinc ion per subunit.</text>
</comment>
<comment type="subunit">
    <text evidence="1">Homohexamer.</text>
</comment>
<comment type="subcellular location">
    <subcellularLocation>
        <location evidence="1">Cell inner membrane</location>
        <topology evidence="1">Multi-pass membrane protein</topology>
        <orientation evidence="1">Cytoplasmic side</orientation>
    </subcellularLocation>
</comment>
<comment type="similarity">
    <text evidence="1">In the central section; belongs to the AAA ATPase family.</text>
</comment>
<comment type="similarity">
    <text evidence="1">In the C-terminal section; belongs to the peptidase M41 family.</text>
</comment>